<feature type="chain" id="PRO_0000436262" description="Ubiquitin-like protease 2" evidence="5">
    <location>
        <begin position="1"/>
        <end position="893"/>
    </location>
</feature>
<feature type="region of interest" description="Protease" evidence="1">
    <location>
        <begin position="538"/>
        <end position="800"/>
    </location>
</feature>
<feature type="active site" evidence="1">
    <location>
        <position position="644"/>
    </location>
</feature>
<feature type="active site" evidence="1">
    <location>
        <position position="678"/>
    </location>
</feature>
<feature type="active site" evidence="6">
    <location>
        <position position="743"/>
    </location>
</feature>
<feature type="mutagenesis site" description="Probable loss of catalytic activity. Failed epidermal enclosure during embryogenesis." evidence="4">
    <original>C</original>
    <variation>S</variation>
    <location>
        <position position="743"/>
    </location>
</feature>
<protein>
    <recommendedName>
        <fullName evidence="8">Ubiquitin-like protease 2</fullName>
        <ecNumber evidence="3">3.4.22.-</ecNumber>
    </recommendedName>
</protein>
<accession>Q23238</accession>
<keyword id="KW-0963">Cytoplasm</keyword>
<keyword id="KW-0217">Developmental protein</keyword>
<keyword id="KW-0378">Hydrolase</keyword>
<keyword id="KW-0539">Nucleus</keyword>
<keyword id="KW-0645">Protease</keyword>
<keyword id="KW-1185">Reference proteome</keyword>
<keyword id="KW-0788">Thiol protease</keyword>
<dbReference type="EC" id="3.4.22.-" evidence="3"/>
<dbReference type="EMBL" id="BX284602">
    <property type="protein sequence ID" value="CCD73695.1"/>
    <property type="molecule type" value="Genomic_DNA"/>
</dbReference>
<dbReference type="PIR" id="T26650">
    <property type="entry name" value="T26650"/>
</dbReference>
<dbReference type="RefSeq" id="NP_494914.1">
    <property type="nucleotide sequence ID" value="NM_062513.6"/>
</dbReference>
<dbReference type="SMR" id="Q23238"/>
<dbReference type="FunCoup" id="Q23238">
    <property type="interactions" value="1527"/>
</dbReference>
<dbReference type="STRING" id="6239.Y38A8.3a.2"/>
<dbReference type="MEROPS" id="C48.A12"/>
<dbReference type="PaxDb" id="6239-Y38A8.3"/>
<dbReference type="PeptideAtlas" id="Q23238"/>
<dbReference type="EnsemblMetazoa" id="Y38A8.3a.1">
    <property type="protein sequence ID" value="Y38A8.3a.1"/>
    <property type="gene ID" value="WBGene00006737"/>
</dbReference>
<dbReference type="GeneID" id="173859"/>
<dbReference type="KEGG" id="cel:CELE_Y38A8.3"/>
<dbReference type="UCSC" id="Y38A8.3">
    <property type="organism name" value="c. elegans"/>
</dbReference>
<dbReference type="AGR" id="WB:WBGene00006737"/>
<dbReference type="CTD" id="173859"/>
<dbReference type="WormBase" id="Y38A8.3a">
    <property type="protein sequence ID" value="CE29374"/>
    <property type="gene ID" value="WBGene00006737"/>
    <property type="gene designation" value="ulp-2"/>
</dbReference>
<dbReference type="eggNOG" id="KOG0779">
    <property type="taxonomic scope" value="Eukaryota"/>
</dbReference>
<dbReference type="HOGENOM" id="CLU_354595_0_0_1"/>
<dbReference type="InParanoid" id="Q23238"/>
<dbReference type="OMA" id="NAPKTYM"/>
<dbReference type="OrthoDB" id="442460at2759"/>
<dbReference type="Reactome" id="R-CEL-3065679">
    <property type="pathway name" value="SUMO is proteolytically processed"/>
</dbReference>
<dbReference type="Reactome" id="R-CEL-6791226">
    <property type="pathway name" value="Major pathway of rRNA processing in the nucleolus and cytosol"/>
</dbReference>
<dbReference type="PRO" id="PR:Q23238"/>
<dbReference type="Proteomes" id="UP000001940">
    <property type="component" value="Chromosome II"/>
</dbReference>
<dbReference type="Bgee" id="WBGene00006737">
    <property type="expression patterns" value="Expressed in germ line (C elegans) and 4 other cell types or tissues"/>
</dbReference>
<dbReference type="ExpressionAtlas" id="Q23238">
    <property type="expression patterns" value="baseline and differential"/>
</dbReference>
<dbReference type="GO" id="GO:0005829">
    <property type="term" value="C:cytosol"/>
    <property type="evidence" value="ECO:0000314"/>
    <property type="project" value="WormBase"/>
</dbReference>
<dbReference type="GO" id="GO:0005634">
    <property type="term" value="C:nucleus"/>
    <property type="evidence" value="ECO:0000314"/>
    <property type="project" value="WormBase"/>
</dbReference>
<dbReference type="GO" id="GO:0016929">
    <property type="term" value="F:deSUMOylase activity"/>
    <property type="evidence" value="ECO:0000250"/>
    <property type="project" value="WormBase"/>
</dbReference>
<dbReference type="GO" id="GO:0034334">
    <property type="term" value="P:adherens junction maintenance"/>
    <property type="evidence" value="ECO:0000315"/>
    <property type="project" value="WormBase"/>
</dbReference>
<dbReference type="GO" id="GO:0016926">
    <property type="term" value="P:protein desumoylation"/>
    <property type="evidence" value="ECO:0000315"/>
    <property type="project" value="WormBase"/>
</dbReference>
<dbReference type="GO" id="GO:0006508">
    <property type="term" value="P:proteolysis"/>
    <property type="evidence" value="ECO:0007669"/>
    <property type="project" value="UniProtKB-KW"/>
</dbReference>
<dbReference type="GO" id="GO:0070587">
    <property type="term" value="P:regulation of cell-cell adhesion involved in gastrulation"/>
    <property type="evidence" value="ECO:0000315"/>
    <property type="project" value="WormBase"/>
</dbReference>
<dbReference type="FunFam" id="3.30.310.130:FF:000014">
    <property type="entry name" value="Ubiquitin-like protease 2"/>
    <property type="match status" value="1"/>
</dbReference>
<dbReference type="Gene3D" id="1.10.418.20">
    <property type="match status" value="1"/>
</dbReference>
<dbReference type="Gene3D" id="3.30.310.130">
    <property type="entry name" value="Ubiquitin-related"/>
    <property type="match status" value="1"/>
</dbReference>
<dbReference type="InterPro" id="IPR038765">
    <property type="entry name" value="Papain-like_cys_pep_sf"/>
</dbReference>
<dbReference type="InterPro" id="IPR003653">
    <property type="entry name" value="Peptidase_C48_C"/>
</dbReference>
<dbReference type="PANTHER" id="PTHR46915:SF2">
    <property type="entry name" value="UBIQUITIN-LIKE PROTEASE 4"/>
    <property type="match status" value="1"/>
</dbReference>
<dbReference type="PANTHER" id="PTHR46915">
    <property type="entry name" value="UBIQUITIN-LIKE PROTEASE 4-RELATED"/>
    <property type="match status" value="1"/>
</dbReference>
<dbReference type="Pfam" id="PF02902">
    <property type="entry name" value="Peptidase_C48"/>
    <property type="match status" value="1"/>
</dbReference>
<dbReference type="SUPFAM" id="SSF54001">
    <property type="entry name" value="Cysteine proteinases"/>
    <property type="match status" value="1"/>
</dbReference>
<dbReference type="PROSITE" id="PS50600">
    <property type="entry name" value="ULP_PROTEASE"/>
    <property type="match status" value="1"/>
</dbReference>
<name>ULP2_CAEEL</name>
<reference evidence="7" key="1">
    <citation type="journal article" date="1998" name="Science">
        <title>Genome sequence of the nematode C. elegans: a platform for investigating biology.</title>
        <authorList>
            <consortium name="The C. elegans sequencing consortium"/>
        </authorList>
    </citation>
    <scope>NUCLEOTIDE SEQUENCE [LARGE SCALE GENOMIC DNA]</scope>
    <source>
        <strain evidence="7">Bristol N2</strain>
    </source>
</reference>
<reference evidence="5" key="2">
    <citation type="journal article" date="2015" name="Dev. Cell">
        <title>ULP-2 SUMO Protease Regulates E-Cadherin Recruitment to Adherens Junctions.</title>
        <authorList>
            <person name="Tsur A."/>
            <person name="Bening Abu-Shach U."/>
            <person name="Broday L."/>
        </authorList>
    </citation>
    <scope>FUNCTION</scope>
    <scope>SUBCELLULAR LOCATION</scope>
    <scope>DEVELOPMENTAL STAGE</scope>
    <scope>DISRUPTION PHENOTYPE</scope>
    <scope>MUTAGENESIS OF CYS-743</scope>
</reference>
<sequence length="893" mass="102426">MSDSTQMEANAAINEIKKRTRKLDQSLQMRFCADQFFIGNHCTKLASGKSIIISQNSKNRICLRFFMAADPLVGYTGRDFGIAFNQIDHISLKDEQQENPAVLICTLNLSSYTKMCKLQTGLKDVVEKPFLYNKSLARNLTFILKPWNDDPDTFVKISYNDEHREYVHSYDYDVAKSLMFKEVQAVWEQSLKEQLQRRHQTGRVYLTSQLSEMTPREWVQFLADQKLSKIVCHNGSIQYARVEDNPHGRKHTAVATNGFDHRGTRVLNSFGKAHASLATQEKSYAKKRKLTEQSLKLIYRNDRSVWLEGSCAKNLKMPKINSEPNMGEFMGWPDMDNAMTHPTSNFENEDVMKSTKQPNDFVSFEQLQAPPPVLQRQNGAIYSTQSVAFTHISGNDGVEDLTEKISHLGEEAYNIDMANALHAFSDNWHYEIHPNTVHNASFEQLHIGDGNSSIGTIGFNPLEPYPQSSFPQSNNWQQAHGDFTFPQVSFPNTQQGSCLPSTPTAALPPTRPVVEKIPPDTQLFTFPPSGSCTTGMDPVVLLVKDIKTLDRKEFLNDSVMAFMLNYIAFMLSSELMKSVHMCNTFLFVNLTRLLPPLCFSKRRPIEPEHIKIVKDNCPRVLRWTRKFDVLAKDYIIIPINEDLHWLVIAVINPSGAIVDMSNEEASRAAPKCYIVFFDPLSGLDPSKKNHMCHCIKIYLAQLYENTKAPGMKFASKNPTIYDEERVVVTRAENTPIQDNFYDCGLYVLHFIEGLFCYPNRPVNVNDFPNFDWSKFFPEANKMCDLMRDKVYNLILQQADKPARSRLAKFERENKCGLSREGALRKARRHSAVNERRTKRHRDYYARHYSLSPPHRNVMNDDPTFMNPRGLAEMPITRLVRRLRIPEDNFPIAY</sequence>
<organism evidence="7">
    <name type="scientific">Caenorhabditis elegans</name>
    <dbReference type="NCBI Taxonomy" id="6239"/>
    <lineage>
        <taxon>Eukaryota</taxon>
        <taxon>Metazoa</taxon>
        <taxon>Ecdysozoa</taxon>
        <taxon>Nematoda</taxon>
        <taxon>Chromadorea</taxon>
        <taxon>Rhabditida</taxon>
        <taxon>Rhabditina</taxon>
        <taxon>Rhabditomorpha</taxon>
        <taxon>Rhabditoidea</taxon>
        <taxon>Rhabditidae</taxon>
        <taxon>Peloderinae</taxon>
        <taxon>Caenorhabditis</taxon>
    </lineage>
</organism>
<evidence type="ECO:0000250" key="1">
    <source>
        <dbReference type="UniProtKB" id="Q02724"/>
    </source>
</evidence>
<evidence type="ECO:0000250" key="2">
    <source>
        <dbReference type="UniProtKB" id="Q8RWN0"/>
    </source>
</evidence>
<evidence type="ECO:0000250" key="3">
    <source>
        <dbReference type="UniProtKB" id="Q9GZR1"/>
    </source>
</evidence>
<evidence type="ECO:0000269" key="4">
    <source>
    </source>
</evidence>
<evidence type="ECO:0000305" key="5"/>
<evidence type="ECO:0000305" key="6">
    <source>
    </source>
</evidence>
<evidence type="ECO:0000312" key="7">
    <source>
        <dbReference type="Proteomes" id="UP000001940"/>
    </source>
</evidence>
<evidence type="ECO:0000312" key="8">
    <source>
        <dbReference type="WormBase" id="Y38A8.3a"/>
    </source>
</evidence>
<proteinExistence type="evidence at protein level"/>
<gene>
    <name evidence="8" type="primary">ulp-2</name>
    <name evidence="8" type="ORF">Y38A8.3</name>
</gene>
<comment type="function">
    <text evidence="2 4">Protease that catalyzes two essential functions in the smo-1 pathway: processing of full-length smo-1 to their mature forms and deconjugation of smo-1 from targeted proteins (By similarity). May deconjugate smo-1 from the cadherin protein hmr-1 and plays a role in its recruitment to and the maintenance of adherens junctions (PubMed:26412237). Required for epidermal morphogenesis during embryonic development (PubMed:26412237).</text>
</comment>
<comment type="subcellular location">
    <subcellularLocation>
        <location evidence="4">Nucleus</location>
    </subcellularLocation>
    <subcellularLocation>
        <location evidence="4">Cytoplasm</location>
        <location evidence="4">Cytosol</location>
    </subcellularLocation>
</comment>
<comment type="developmental stage">
    <text evidence="4">First expressed mid-gastrulation, at the 200-cell stage of embryogenesis with expression increasing during epidermal morphogenesis. Also expressed in epidermal cells and also in the underlying neuroblasts during embryonic development.</text>
</comment>
<comment type="disruption phenotype">
    <text evidence="4">64% of embryos arrest in between late gastrulation and epidermal morphogenesis with failures in embryogenesis occurring during late gastrulation, epidermal enclosure and elongation. RNAi-mediated knockdown results in arrest in 29% of embryos which display a range of embryonic abnormalities including increased bulge formation (humpback phenotype), epidermal enclosure defects where the ventral cleft fails to close during embryogenesis, impeded or inhibited ventral neuroblast cell migration and irregular cell shape and positioning. Knockdown also results in failure of the catenin-cadherin complex, specifically the cadherin protein, hmr-1 to localize to adherens junctions, but to accumulate along the basolateral membrane of the cell.</text>
</comment>
<comment type="similarity">
    <text evidence="5">Belongs to the peptidase C48 family.</text>
</comment>